<evidence type="ECO:0000255" key="1">
    <source>
        <dbReference type="HAMAP-Rule" id="MF_00358"/>
    </source>
</evidence>
<evidence type="ECO:0000256" key="2">
    <source>
        <dbReference type="SAM" id="MobiDB-lite"/>
    </source>
</evidence>
<evidence type="ECO:0000305" key="3"/>
<keyword id="KW-0687">Ribonucleoprotein</keyword>
<keyword id="KW-0689">Ribosomal protein</keyword>
<sequence>MPVIKVRENEPFDVALRRFKRSCEKAGVLAEVRRREFYEKPTTERKRAKASAVKRHAKKLARENARRTRLY</sequence>
<feature type="chain" id="PRO_1000120614" description="Small ribosomal subunit protein bS21">
    <location>
        <begin position="1"/>
        <end position="71"/>
    </location>
</feature>
<feature type="region of interest" description="Disordered" evidence="2">
    <location>
        <begin position="43"/>
        <end position="71"/>
    </location>
</feature>
<feature type="compositionally biased region" description="Basic residues" evidence="2">
    <location>
        <begin position="46"/>
        <end position="59"/>
    </location>
</feature>
<feature type="compositionally biased region" description="Basic and acidic residues" evidence="2">
    <location>
        <begin position="60"/>
        <end position="71"/>
    </location>
</feature>
<name>RS21_ECO7I</name>
<comment type="similarity">
    <text evidence="1">Belongs to the bacterial ribosomal protein bS21 family.</text>
</comment>
<organism>
    <name type="scientific">Escherichia coli O7:K1 (strain IAI39 / ExPEC)</name>
    <dbReference type="NCBI Taxonomy" id="585057"/>
    <lineage>
        <taxon>Bacteria</taxon>
        <taxon>Pseudomonadati</taxon>
        <taxon>Pseudomonadota</taxon>
        <taxon>Gammaproteobacteria</taxon>
        <taxon>Enterobacterales</taxon>
        <taxon>Enterobacteriaceae</taxon>
        <taxon>Escherichia</taxon>
    </lineage>
</organism>
<reference key="1">
    <citation type="journal article" date="2009" name="PLoS Genet.">
        <title>Organised genome dynamics in the Escherichia coli species results in highly diverse adaptive paths.</title>
        <authorList>
            <person name="Touchon M."/>
            <person name="Hoede C."/>
            <person name="Tenaillon O."/>
            <person name="Barbe V."/>
            <person name="Baeriswyl S."/>
            <person name="Bidet P."/>
            <person name="Bingen E."/>
            <person name="Bonacorsi S."/>
            <person name="Bouchier C."/>
            <person name="Bouvet O."/>
            <person name="Calteau A."/>
            <person name="Chiapello H."/>
            <person name="Clermont O."/>
            <person name="Cruveiller S."/>
            <person name="Danchin A."/>
            <person name="Diard M."/>
            <person name="Dossat C."/>
            <person name="Karoui M.E."/>
            <person name="Frapy E."/>
            <person name="Garry L."/>
            <person name="Ghigo J.M."/>
            <person name="Gilles A.M."/>
            <person name="Johnson J."/>
            <person name="Le Bouguenec C."/>
            <person name="Lescat M."/>
            <person name="Mangenot S."/>
            <person name="Martinez-Jehanne V."/>
            <person name="Matic I."/>
            <person name="Nassif X."/>
            <person name="Oztas S."/>
            <person name="Petit M.A."/>
            <person name="Pichon C."/>
            <person name="Rouy Z."/>
            <person name="Ruf C.S."/>
            <person name="Schneider D."/>
            <person name="Tourret J."/>
            <person name="Vacherie B."/>
            <person name="Vallenet D."/>
            <person name="Medigue C."/>
            <person name="Rocha E.P.C."/>
            <person name="Denamur E."/>
        </authorList>
    </citation>
    <scope>NUCLEOTIDE SEQUENCE [LARGE SCALE GENOMIC DNA]</scope>
    <source>
        <strain>IAI39 / ExPEC</strain>
    </source>
</reference>
<dbReference type="EMBL" id="CU928164">
    <property type="protein sequence ID" value="CAR19677.1"/>
    <property type="molecule type" value="Genomic_DNA"/>
</dbReference>
<dbReference type="RefSeq" id="WP_001144069.1">
    <property type="nucleotide sequence ID" value="NC_011750.1"/>
</dbReference>
<dbReference type="RefSeq" id="YP_002409465.1">
    <property type="nucleotide sequence ID" value="NC_011750.1"/>
</dbReference>
<dbReference type="SMR" id="B7NJS8"/>
<dbReference type="STRING" id="585057.ECIAI39_3561"/>
<dbReference type="GeneID" id="98390195"/>
<dbReference type="KEGG" id="ect:ECIAI39_3561"/>
<dbReference type="PATRIC" id="fig|585057.6.peg.3690"/>
<dbReference type="HOGENOM" id="CLU_159258_1_0_6"/>
<dbReference type="PRO" id="PR:B7NJS8"/>
<dbReference type="Proteomes" id="UP000000749">
    <property type="component" value="Chromosome"/>
</dbReference>
<dbReference type="GO" id="GO:1990904">
    <property type="term" value="C:ribonucleoprotein complex"/>
    <property type="evidence" value="ECO:0007669"/>
    <property type="project" value="UniProtKB-KW"/>
</dbReference>
<dbReference type="GO" id="GO:0005840">
    <property type="term" value="C:ribosome"/>
    <property type="evidence" value="ECO:0007669"/>
    <property type="project" value="UniProtKB-KW"/>
</dbReference>
<dbReference type="GO" id="GO:0003735">
    <property type="term" value="F:structural constituent of ribosome"/>
    <property type="evidence" value="ECO:0007669"/>
    <property type="project" value="InterPro"/>
</dbReference>
<dbReference type="GO" id="GO:0006412">
    <property type="term" value="P:translation"/>
    <property type="evidence" value="ECO:0007669"/>
    <property type="project" value="UniProtKB-UniRule"/>
</dbReference>
<dbReference type="FunFam" id="1.20.5.1150:FF:000001">
    <property type="entry name" value="30S ribosomal protein S21"/>
    <property type="match status" value="1"/>
</dbReference>
<dbReference type="Gene3D" id="1.20.5.1150">
    <property type="entry name" value="Ribosomal protein S8"/>
    <property type="match status" value="1"/>
</dbReference>
<dbReference type="HAMAP" id="MF_00358">
    <property type="entry name" value="Ribosomal_bS21"/>
    <property type="match status" value="1"/>
</dbReference>
<dbReference type="InterPro" id="IPR001911">
    <property type="entry name" value="Ribosomal_bS21"/>
</dbReference>
<dbReference type="InterPro" id="IPR018278">
    <property type="entry name" value="Ribosomal_bS21_CS"/>
</dbReference>
<dbReference type="InterPro" id="IPR038380">
    <property type="entry name" value="Ribosomal_bS21_sf"/>
</dbReference>
<dbReference type="NCBIfam" id="TIGR00030">
    <property type="entry name" value="S21p"/>
    <property type="match status" value="1"/>
</dbReference>
<dbReference type="PANTHER" id="PTHR21109">
    <property type="entry name" value="MITOCHONDRIAL 28S RIBOSOMAL PROTEIN S21"/>
    <property type="match status" value="1"/>
</dbReference>
<dbReference type="PANTHER" id="PTHR21109:SF22">
    <property type="entry name" value="SMALL RIBOSOMAL SUBUNIT PROTEIN BS21"/>
    <property type="match status" value="1"/>
</dbReference>
<dbReference type="Pfam" id="PF01165">
    <property type="entry name" value="Ribosomal_S21"/>
    <property type="match status" value="1"/>
</dbReference>
<dbReference type="PRINTS" id="PR00976">
    <property type="entry name" value="RIBOSOMALS21"/>
</dbReference>
<dbReference type="PROSITE" id="PS01181">
    <property type="entry name" value="RIBOSOMAL_S21"/>
    <property type="match status" value="1"/>
</dbReference>
<protein>
    <recommendedName>
        <fullName evidence="1">Small ribosomal subunit protein bS21</fullName>
    </recommendedName>
    <alternativeName>
        <fullName evidence="3">30S ribosomal protein S21</fullName>
    </alternativeName>
</protein>
<gene>
    <name evidence="1" type="primary">rpsU</name>
    <name type="ordered locus">ECIAI39_3561</name>
</gene>
<proteinExistence type="inferred from homology"/>
<accession>B7NJS8</accession>